<gene>
    <name type="ordered locus">SPH_2064</name>
</gene>
<comment type="subcellular location">
    <subcellularLocation>
        <location evidence="1">Cytoplasm</location>
    </subcellularLocation>
</comment>
<comment type="similarity">
    <text evidence="1">Belongs to the TACO1 family. YeeN subfamily.</text>
</comment>
<feature type="chain" id="PRO_1000132241" description="Probable transcriptional regulatory protein SPH_2064">
    <location>
        <begin position="1"/>
        <end position="238"/>
    </location>
</feature>
<protein>
    <recommendedName>
        <fullName evidence="1">Probable transcriptional regulatory protein SPH_2064</fullName>
    </recommendedName>
</protein>
<reference key="1">
    <citation type="journal article" date="2010" name="Genome Biol.">
        <title>Structure and dynamics of the pan-genome of Streptococcus pneumoniae and closely related species.</title>
        <authorList>
            <person name="Donati C."/>
            <person name="Hiller N.L."/>
            <person name="Tettelin H."/>
            <person name="Muzzi A."/>
            <person name="Croucher N.J."/>
            <person name="Angiuoli S.V."/>
            <person name="Oggioni M."/>
            <person name="Dunning Hotopp J.C."/>
            <person name="Hu F.Z."/>
            <person name="Riley D.R."/>
            <person name="Covacci A."/>
            <person name="Mitchell T.J."/>
            <person name="Bentley S.D."/>
            <person name="Kilian M."/>
            <person name="Ehrlich G.D."/>
            <person name="Rappuoli R."/>
            <person name="Moxon E.R."/>
            <person name="Masignani V."/>
        </authorList>
    </citation>
    <scope>NUCLEOTIDE SEQUENCE [LARGE SCALE GENOMIC DNA]</scope>
    <source>
        <strain>Hungary19A-6</strain>
    </source>
</reference>
<evidence type="ECO:0000255" key="1">
    <source>
        <dbReference type="HAMAP-Rule" id="MF_00918"/>
    </source>
</evidence>
<keyword id="KW-0963">Cytoplasm</keyword>
<keyword id="KW-0238">DNA-binding</keyword>
<keyword id="KW-0804">Transcription</keyword>
<keyword id="KW-0805">Transcription regulation</keyword>
<accession>B1I8C4</accession>
<dbReference type="EMBL" id="CP000936">
    <property type="protein sequence ID" value="ACA35551.1"/>
    <property type="molecule type" value="Genomic_DNA"/>
</dbReference>
<dbReference type="RefSeq" id="WP_000532874.1">
    <property type="nucleotide sequence ID" value="NC_010380.1"/>
</dbReference>
<dbReference type="SMR" id="B1I8C4"/>
<dbReference type="KEGG" id="spv:SPH_2064"/>
<dbReference type="HOGENOM" id="CLU_062974_2_0_9"/>
<dbReference type="Proteomes" id="UP000002163">
    <property type="component" value="Chromosome"/>
</dbReference>
<dbReference type="GO" id="GO:0005829">
    <property type="term" value="C:cytosol"/>
    <property type="evidence" value="ECO:0007669"/>
    <property type="project" value="TreeGrafter"/>
</dbReference>
<dbReference type="GO" id="GO:0003677">
    <property type="term" value="F:DNA binding"/>
    <property type="evidence" value="ECO:0007669"/>
    <property type="project" value="UniProtKB-UniRule"/>
</dbReference>
<dbReference type="GO" id="GO:0006355">
    <property type="term" value="P:regulation of DNA-templated transcription"/>
    <property type="evidence" value="ECO:0007669"/>
    <property type="project" value="UniProtKB-UniRule"/>
</dbReference>
<dbReference type="FunFam" id="1.10.10.200:FF:000003">
    <property type="entry name" value="Probable transcriptional regulatory protein YeeN"/>
    <property type="match status" value="1"/>
</dbReference>
<dbReference type="FunFam" id="3.30.70.980:FF:000004">
    <property type="entry name" value="Probable transcriptional regulatory protein YeeN"/>
    <property type="match status" value="1"/>
</dbReference>
<dbReference type="Gene3D" id="1.10.10.200">
    <property type="match status" value="1"/>
</dbReference>
<dbReference type="Gene3D" id="3.30.70.980">
    <property type="match status" value="2"/>
</dbReference>
<dbReference type="HAMAP" id="MF_00693">
    <property type="entry name" value="Transcrip_reg_TACO1"/>
    <property type="match status" value="1"/>
</dbReference>
<dbReference type="HAMAP" id="MF_00918">
    <property type="entry name" value="Transcrip_reg_TACO1_YeeN"/>
    <property type="match status" value="1"/>
</dbReference>
<dbReference type="InterPro" id="IPR017856">
    <property type="entry name" value="Integrase-like_N"/>
</dbReference>
<dbReference type="InterPro" id="IPR048300">
    <property type="entry name" value="TACO1_YebC-like_2nd/3rd_dom"/>
</dbReference>
<dbReference type="InterPro" id="IPR049083">
    <property type="entry name" value="TACO1_YebC_N"/>
</dbReference>
<dbReference type="InterPro" id="IPR002876">
    <property type="entry name" value="Transcrip_reg_TACO1-like"/>
</dbReference>
<dbReference type="InterPro" id="IPR026564">
    <property type="entry name" value="Transcrip_reg_TACO1-like_dom3"/>
</dbReference>
<dbReference type="InterPro" id="IPR026562">
    <property type="entry name" value="Transcrip_reg_TACO1_YeeN"/>
</dbReference>
<dbReference type="InterPro" id="IPR029072">
    <property type="entry name" value="YebC-like"/>
</dbReference>
<dbReference type="NCBIfam" id="NF001030">
    <property type="entry name" value="PRK00110.1"/>
    <property type="match status" value="1"/>
</dbReference>
<dbReference type="NCBIfam" id="NF009044">
    <property type="entry name" value="PRK12378.1"/>
    <property type="match status" value="1"/>
</dbReference>
<dbReference type="NCBIfam" id="TIGR01033">
    <property type="entry name" value="YebC/PmpR family DNA-binding transcriptional regulator"/>
    <property type="match status" value="1"/>
</dbReference>
<dbReference type="PANTHER" id="PTHR12532">
    <property type="entry name" value="TRANSLATIONAL ACTIVATOR OF CYTOCHROME C OXIDASE 1"/>
    <property type="match status" value="1"/>
</dbReference>
<dbReference type="PANTHER" id="PTHR12532:SF0">
    <property type="entry name" value="TRANSLATIONAL ACTIVATOR OF CYTOCHROME C OXIDASE 1"/>
    <property type="match status" value="1"/>
</dbReference>
<dbReference type="Pfam" id="PF20772">
    <property type="entry name" value="TACO1_YebC_N"/>
    <property type="match status" value="1"/>
</dbReference>
<dbReference type="Pfam" id="PF01709">
    <property type="entry name" value="Transcrip_reg"/>
    <property type="match status" value="1"/>
</dbReference>
<dbReference type="SUPFAM" id="SSF75625">
    <property type="entry name" value="YebC-like"/>
    <property type="match status" value="1"/>
</dbReference>
<name>Y2064_STRPI</name>
<sequence length="238" mass="25786">MGRKWANIVAKKTAKDGANSKVYAKFGVEIYVAAKKGDPDPESNSALKFVIDRAKQAQVPKHIIDKAIDKAKGNTDETFTEGRYEGFGPNGSMLIVDTLTSNVNRTAANVRAAFGKNGGNMGASGSVSYLFDNKGVIVFGGEDADAVFEQLLEADVDVDDVEAQEGTITVYTAPTDLHKAIVALRESGIEEFQVTELEMIPQSEVELSGEALETFEKLYSVLEDDEDVQKIYTNVDGF</sequence>
<organism>
    <name type="scientific">Streptococcus pneumoniae (strain Hungary19A-6)</name>
    <dbReference type="NCBI Taxonomy" id="487214"/>
    <lineage>
        <taxon>Bacteria</taxon>
        <taxon>Bacillati</taxon>
        <taxon>Bacillota</taxon>
        <taxon>Bacilli</taxon>
        <taxon>Lactobacillales</taxon>
        <taxon>Streptococcaceae</taxon>
        <taxon>Streptococcus</taxon>
    </lineage>
</organism>
<proteinExistence type="inferred from homology"/>